<dbReference type="EC" id="1.17.4.1" evidence="1"/>
<dbReference type="EMBL" id="AY961628">
    <property type="protein sequence ID" value="AAY41105.1"/>
    <property type="molecule type" value="Genomic_DNA"/>
</dbReference>
<dbReference type="SMR" id="Q3KSU5"/>
<dbReference type="IntAct" id="Q3KSU5">
    <property type="interactions" value="2"/>
</dbReference>
<dbReference type="Proteomes" id="UP000007641">
    <property type="component" value="Genome"/>
</dbReference>
<dbReference type="GO" id="GO:0005524">
    <property type="term" value="F:ATP binding"/>
    <property type="evidence" value="ECO:0007669"/>
    <property type="project" value="UniProtKB-UniRule"/>
</dbReference>
<dbReference type="GO" id="GO:0004748">
    <property type="term" value="F:ribonucleoside-diphosphate reductase activity, thioredoxin disulfide as acceptor"/>
    <property type="evidence" value="ECO:0007669"/>
    <property type="project" value="UniProtKB-UniRule"/>
</dbReference>
<dbReference type="GO" id="GO:0009263">
    <property type="term" value="P:deoxyribonucleotide biosynthetic process"/>
    <property type="evidence" value="ECO:0007669"/>
    <property type="project" value="InterPro"/>
</dbReference>
<dbReference type="GO" id="GO:0006260">
    <property type="term" value="P:DNA replication"/>
    <property type="evidence" value="ECO:0007669"/>
    <property type="project" value="UniProtKB-KW"/>
</dbReference>
<dbReference type="GO" id="GO:0019046">
    <property type="term" value="P:release from viral latency"/>
    <property type="evidence" value="ECO:0007669"/>
    <property type="project" value="UniProtKB-KW"/>
</dbReference>
<dbReference type="Gene3D" id="3.20.70.20">
    <property type="match status" value="1"/>
</dbReference>
<dbReference type="HAMAP" id="MF_04026">
    <property type="entry name" value="HSV_RIR1"/>
    <property type="match status" value="1"/>
</dbReference>
<dbReference type="InterPro" id="IPR034717">
    <property type="entry name" value="HSV_RIR1"/>
</dbReference>
<dbReference type="InterPro" id="IPR013346">
    <property type="entry name" value="NrdE_NrdA_C"/>
</dbReference>
<dbReference type="InterPro" id="IPR000788">
    <property type="entry name" value="RNR_lg_C"/>
</dbReference>
<dbReference type="InterPro" id="IPR013509">
    <property type="entry name" value="RNR_lsu_N"/>
</dbReference>
<dbReference type="InterPro" id="IPR039718">
    <property type="entry name" value="Rrm1"/>
</dbReference>
<dbReference type="NCBIfam" id="TIGR02506">
    <property type="entry name" value="NrdE_NrdA"/>
    <property type="match status" value="1"/>
</dbReference>
<dbReference type="PANTHER" id="PTHR11573">
    <property type="entry name" value="RIBONUCLEOSIDE-DIPHOSPHATE REDUCTASE LARGE CHAIN"/>
    <property type="match status" value="1"/>
</dbReference>
<dbReference type="PANTHER" id="PTHR11573:SF6">
    <property type="entry name" value="RIBONUCLEOSIDE-DIPHOSPHATE REDUCTASE LARGE SUBUNIT"/>
    <property type="match status" value="1"/>
</dbReference>
<dbReference type="Pfam" id="PF02867">
    <property type="entry name" value="Ribonuc_red_lgC"/>
    <property type="match status" value="1"/>
</dbReference>
<dbReference type="Pfam" id="PF00317">
    <property type="entry name" value="Ribonuc_red_lgN"/>
    <property type="match status" value="1"/>
</dbReference>
<dbReference type="PRINTS" id="PR01183">
    <property type="entry name" value="RIBORDTASEM1"/>
</dbReference>
<dbReference type="SUPFAM" id="SSF51998">
    <property type="entry name" value="PFL-like glycyl radical enzymes"/>
    <property type="match status" value="1"/>
</dbReference>
<dbReference type="PROSITE" id="PS00089">
    <property type="entry name" value="RIBORED_LARGE"/>
    <property type="match status" value="1"/>
</dbReference>
<accession>Q3KSU5</accession>
<organism>
    <name type="scientific">Epstein-Barr virus (strain GD1)</name>
    <name type="common">HHV-4</name>
    <name type="synonym">Human gammaherpesvirus 4</name>
    <dbReference type="NCBI Taxonomy" id="10376"/>
    <lineage>
        <taxon>Viruses</taxon>
        <taxon>Duplodnaviria</taxon>
        <taxon>Heunggongvirae</taxon>
        <taxon>Peploviricota</taxon>
        <taxon>Herviviricetes</taxon>
        <taxon>Herpesvirales</taxon>
        <taxon>Orthoherpesviridae</taxon>
        <taxon>Gammaherpesvirinae</taxon>
        <taxon>Lymphocryptovirus</taxon>
        <taxon>Lymphocryptovirus humangamma4</taxon>
    </lineage>
</organism>
<gene>
    <name evidence="1" type="primary">RIR1</name>
    <name type="ORF">BORF2</name>
</gene>
<organismHost>
    <name type="scientific">Homo sapiens</name>
    <name type="common">Human</name>
    <dbReference type="NCBI Taxonomy" id="9606"/>
</organismHost>
<proteinExistence type="inferred from homology"/>
<feature type="chain" id="PRO_0000375966" description="Ribonucleoside-diphosphate reductase large subunit">
    <location>
        <begin position="1"/>
        <end position="826"/>
    </location>
</feature>
<feature type="active site" description="Proton acceptor" evidence="1">
    <location>
        <position position="387"/>
    </location>
</feature>
<feature type="active site" description="Cysteine radical intermediate" evidence="1">
    <location>
        <position position="389"/>
    </location>
</feature>
<feature type="active site" description="Proton acceptor" evidence="1">
    <location>
        <position position="391"/>
    </location>
</feature>
<feature type="binding site" evidence="1">
    <location>
        <position position="171"/>
    </location>
    <ligand>
        <name>substrate</name>
    </ligand>
</feature>
<feature type="binding site" evidence="1">
    <location>
        <begin position="186"/>
        <end position="187"/>
    </location>
    <ligand>
        <name>substrate</name>
    </ligand>
</feature>
<feature type="binding site" evidence="1">
    <location>
        <position position="217"/>
    </location>
    <ligand>
        <name>substrate</name>
    </ligand>
</feature>
<feature type="binding site" evidence="1">
    <location>
        <begin position="387"/>
        <end position="391"/>
    </location>
    <ligand>
        <name>substrate</name>
    </ligand>
</feature>
<feature type="binding site" evidence="1">
    <location>
        <begin position="594"/>
        <end position="598"/>
    </location>
    <ligand>
        <name>substrate</name>
    </ligand>
</feature>
<feature type="site" description="Important for hydrogen atom transfer" evidence="1">
    <location>
        <position position="187"/>
    </location>
</feature>
<feature type="site" description="Important for hydrogen atom transfer" evidence="1">
    <location>
        <position position="403"/>
    </location>
</feature>
<feature type="site" description="Important for electron transfer" evidence="1">
    <location>
        <position position="725"/>
    </location>
</feature>
<feature type="site" description="Important for electron transfer" evidence="1">
    <location>
        <position position="726"/>
    </location>
</feature>
<feature type="site" description="Interacts with thioredoxin/glutaredoxin" evidence="1">
    <location>
        <position position="822"/>
    </location>
</feature>
<feature type="site" description="Interacts with thioredoxin/glutaredoxin" evidence="1">
    <location>
        <position position="825"/>
    </location>
</feature>
<feature type="disulfide bond" description="Redox-active" evidence="1">
    <location>
        <begin position="187"/>
        <end position="403"/>
    </location>
</feature>
<comment type="function">
    <text evidence="1">Ribonucleoside-diphosphate reductase holoenzyme provides the precursors necessary for viral DNA synthesis. Allows virus growth in non-dividing cells, as well as reactivation from latency in infected hosts. Catalyzes the biosynthesis of deoxyribonucleotides from the corresponding ribonucleotides.</text>
</comment>
<comment type="catalytic activity">
    <reaction evidence="1">
        <text>a 2'-deoxyribonucleoside 5'-diphosphate + [thioredoxin]-disulfide + H2O = a ribonucleoside 5'-diphosphate + [thioredoxin]-dithiol</text>
        <dbReference type="Rhea" id="RHEA:23252"/>
        <dbReference type="Rhea" id="RHEA-COMP:10698"/>
        <dbReference type="Rhea" id="RHEA-COMP:10700"/>
        <dbReference type="ChEBI" id="CHEBI:15377"/>
        <dbReference type="ChEBI" id="CHEBI:29950"/>
        <dbReference type="ChEBI" id="CHEBI:50058"/>
        <dbReference type="ChEBI" id="CHEBI:57930"/>
        <dbReference type="ChEBI" id="CHEBI:73316"/>
        <dbReference type="EC" id="1.17.4.1"/>
    </reaction>
</comment>
<comment type="subunit">
    <text evidence="1">Heterotetramer composed of a homodimer of the large subunit (R1) and a homodimer of the small subunit (R2). Larger multisubunit protein complex are also active, composed of (R1)n(R2)n.</text>
</comment>
<comment type="similarity">
    <text evidence="1">Belongs to the ribonucleoside diphosphate reductase large chain family.</text>
</comment>
<protein>
    <recommendedName>
        <fullName evidence="1">Ribonucleoside-diphosphate reductase large subunit</fullName>
        <shortName evidence="1">R1</shortName>
        <ecNumber evidence="1">1.17.4.1</ecNumber>
    </recommendedName>
    <alternativeName>
        <fullName evidence="1">Ribonucleotide reductase large subunit</fullName>
    </alternativeName>
</protein>
<reference key="1">
    <citation type="journal article" date="2005" name="J. Virol.">
        <title>Genomic sequence analysis of Epstein-Barr virus strain GD1 from a nasopharyngeal carcinoma patient.</title>
        <authorList>
            <person name="Zeng M.-S."/>
            <person name="Li D.-J."/>
            <person name="Liu Q.-L."/>
            <person name="Song L.-B."/>
            <person name="Li M.-Z."/>
            <person name="Zhang R.-H."/>
            <person name="Yu X.-J."/>
            <person name="Wang H.-M."/>
            <person name="Ernberg I."/>
            <person name="Zeng Y.-X."/>
        </authorList>
    </citation>
    <scope>NUCLEOTIDE SEQUENCE [LARGE SCALE GENOMIC DNA]</scope>
</reference>
<reference key="2">
    <citation type="journal article" date="2009" name="Trends Biochem. Sci.">
        <title>Tinkering with a viral ribonucleotide reductase.</title>
        <authorList>
            <person name="Lembo D."/>
            <person name="Brune W."/>
        </authorList>
    </citation>
    <scope>REVIEW</scope>
</reference>
<sequence>MATTNHVEHELLSKLIDELKVKANADPEADVLAGRLLHRLKAESVTHTVAEYLEVFSDKFYDEEFFQMHRDELETRVSAFAQSPAYERIVSSGYLSALRYYDTYLYVGRSGKQESVQHFYMRLAGFCASTTCLYAGLRAALQRARPEIESDMEVFDYYFEHLTSQTVCCSTPFMRFAGVENSTLASCILTTPDLSSEWDVTQALYRHLGRYLFQRAGVGVGVTGAGQDGKHISLLMRMINSHVEYHNYGCKRPVSVAAYMEPWHSQIFKFLETKLPENHERCPGIFTGLFVPELFFKLFRDTPWSDWYLFDPKDAGDLERLYGEEFEREYYRLVTAGKFCGRVSIKSLMFSIVNCAVKAGSPFILLKEACNAHFWRDLQGEAMNAANLCAEVLQPSRKSVATCNLANICLPRCLVNAPLAVRAQRADTQGDELLLALPRLSVTLPGEGAIGDGFSLARLRDATQCATFVVACSILQGSPTYDSRDMASMGLGVQGLADVFADLGWQYTDPPSRSLNKEIFEHMYFTALCTSSLIGLHTRKIFPGFKQSKYAGGWFHWHDWAGTDLSIPREIWSRLSERIVRDGLFNSQFIALMPTSGCAQVTGCSDAFYPFYANASTKVTNKEEALRPNRSFWRHVRLDDREALNLVGGRVSCLPEALRQRYLRFQTAFDYNQEDLIQMSRDRAPFVDQSQSHSLFLREEDAARASTLANLLVRSYELGLKTIMYYCRIEKAADLGVMECKASAALSVPREEQNERSPAEQMLPRPMEPAQVTGPVDIMSKGPGEGPGGWCVPGGLEVCYKYRQLFSEDDLLETDGFTERACESCQ</sequence>
<evidence type="ECO:0000255" key="1">
    <source>
        <dbReference type="HAMAP-Rule" id="MF_04026"/>
    </source>
</evidence>
<keyword id="KW-0067">ATP-binding</keyword>
<keyword id="KW-1015">Disulfide bond</keyword>
<keyword id="KW-0235">DNA replication</keyword>
<keyword id="KW-0244">Early protein</keyword>
<keyword id="KW-0547">Nucleotide-binding</keyword>
<keyword id="KW-0560">Oxidoreductase</keyword>
<keyword id="KW-1251">Viral latency</keyword>
<keyword id="KW-1272">Viral reactivation from latency</keyword>
<name>RIR1_EBVG</name>